<name>PROA_ACTP2</name>
<feature type="chain" id="PRO_1000049931" description="Gamma-glutamyl phosphate reductase">
    <location>
        <begin position="1"/>
        <end position="412"/>
    </location>
</feature>
<sequence>MQMLTLAQQAKIASIELAQFGNVQKNHALLTIAEQLEQRSAEILAANAKDIEFAKNQGISTAIIDRLLLNESRLQGIANDVRNVAKLADPVGQVIDGGVLNSGLKIERQRVPLGVILTIYEARPNVTIDVASLCLKTGNAVILRGGKETKFTNAVLVEVVQQALETAGLPKLAVQAVTDPDRALLLELLKLDRYIDMVIPRGGAGLHQFCKENSTIPVIVGGIGVCHMFVEKSADQEKALELIANAKTQRPSTCNTLETLLVEKAIAGEFLPKLANRMKALDVTLHTDDLQKTEGIEPLDDARMRQEWLSLDLNVVVIDNLTKAVEHIREYGSQHSEAILTSDYQLARQFVAQVDAAAVYINASTRFTDGGEFGLGAEVAVSTQKLHARGPMGLEALTTYKWVCEGDYLVRK</sequence>
<dbReference type="EC" id="1.2.1.41" evidence="1"/>
<dbReference type="EMBL" id="CP000569">
    <property type="protein sequence ID" value="ABN75029.1"/>
    <property type="molecule type" value="Genomic_DNA"/>
</dbReference>
<dbReference type="RefSeq" id="WP_005599725.1">
    <property type="nucleotide sequence ID" value="NC_009053.1"/>
</dbReference>
<dbReference type="SMR" id="A3N3P3"/>
<dbReference type="STRING" id="416269.APL_1951"/>
<dbReference type="EnsemblBacteria" id="ABN75029">
    <property type="protein sequence ID" value="ABN75029"/>
    <property type="gene ID" value="APL_1951"/>
</dbReference>
<dbReference type="GeneID" id="48600255"/>
<dbReference type="KEGG" id="apl:APL_1951"/>
<dbReference type="eggNOG" id="COG0014">
    <property type="taxonomic scope" value="Bacteria"/>
</dbReference>
<dbReference type="HOGENOM" id="CLU_030231_0_0_6"/>
<dbReference type="UniPathway" id="UPA00098">
    <property type="reaction ID" value="UER00360"/>
</dbReference>
<dbReference type="Proteomes" id="UP000001432">
    <property type="component" value="Chromosome"/>
</dbReference>
<dbReference type="GO" id="GO:0005737">
    <property type="term" value="C:cytoplasm"/>
    <property type="evidence" value="ECO:0007669"/>
    <property type="project" value="UniProtKB-SubCell"/>
</dbReference>
<dbReference type="GO" id="GO:0004350">
    <property type="term" value="F:glutamate-5-semialdehyde dehydrogenase activity"/>
    <property type="evidence" value="ECO:0007669"/>
    <property type="project" value="UniProtKB-UniRule"/>
</dbReference>
<dbReference type="GO" id="GO:0050661">
    <property type="term" value="F:NADP binding"/>
    <property type="evidence" value="ECO:0007669"/>
    <property type="project" value="InterPro"/>
</dbReference>
<dbReference type="GO" id="GO:0055129">
    <property type="term" value="P:L-proline biosynthetic process"/>
    <property type="evidence" value="ECO:0007669"/>
    <property type="project" value="UniProtKB-UniRule"/>
</dbReference>
<dbReference type="CDD" id="cd07079">
    <property type="entry name" value="ALDH_F18-19_ProA-GPR"/>
    <property type="match status" value="1"/>
</dbReference>
<dbReference type="FunFam" id="3.40.309.10:FF:000006">
    <property type="entry name" value="Gamma-glutamyl phosphate reductase"/>
    <property type="match status" value="1"/>
</dbReference>
<dbReference type="Gene3D" id="3.40.605.10">
    <property type="entry name" value="Aldehyde Dehydrogenase, Chain A, domain 1"/>
    <property type="match status" value="1"/>
</dbReference>
<dbReference type="Gene3D" id="3.40.309.10">
    <property type="entry name" value="Aldehyde Dehydrogenase, Chain A, domain 2"/>
    <property type="match status" value="1"/>
</dbReference>
<dbReference type="HAMAP" id="MF_00412">
    <property type="entry name" value="ProA"/>
    <property type="match status" value="1"/>
</dbReference>
<dbReference type="InterPro" id="IPR016161">
    <property type="entry name" value="Ald_DH/histidinol_DH"/>
</dbReference>
<dbReference type="InterPro" id="IPR016163">
    <property type="entry name" value="Ald_DH_C"/>
</dbReference>
<dbReference type="InterPro" id="IPR016162">
    <property type="entry name" value="Ald_DH_N"/>
</dbReference>
<dbReference type="InterPro" id="IPR015590">
    <property type="entry name" value="Aldehyde_DH_dom"/>
</dbReference>
<dbReference type="InterPro" id="IPR012134">
    <property type="entry name" value="Glu-5-SA_DH"/>
</dbReference>
<dbReference type="InterPro" id="IPR000965">
    <property type="entry name" value="GPR_dom"/>
</dbReference>
<dbReference type="NCBIfam" id="NF001221">
    <property type="entry name" value="PRK00197.1"/>
    <property type="match status" value="1"/>
</dbReference>
<dbReference type="NCBIfam" id="TIGR00407">
    <property type="entry name" value="proA"/>
    <property type="match status" value="1"/>
</dbReference>
<dbReference type="PANTHER" id="PTHR11063:SF8">
    <property type="entry name" value="DELTA-1-PYRROLINE-5-CARBOXYLATE SYNTHASE"/>
    <property type="match status" value="1"/>
</dbReference>
<dbReference type="PANTHER" id="PTHR11063">
    <property type="entry name" value="GLUTAMATE SEMIALDEHYDE DEHYDROGENASE"/>
    <property type="match status" value="1"/>
</dbReference>
<dbReference type="Pfam" id="PF00171">
    <property type="entry name" value="Aldedh"/>
    <property type="match status" value="1"/>
</dbReference>
<dbReference type="PIRSF" id="PIRSF000151">
    <property type="entry name" value="GPR"/>
    <property type="match status" value="1"/>
</dbReference>
<dbReference type="SUPFAM" id="SSF53720">
    <property type="entry name" value="ALDH-like"/>
    <property type="match status" value="1"/>
</dbReference>
<organism>
    <name type="scientific">Actinobacillus pleuropneumoniae serotype 5b (strain L20)</name>
    <dbReference type="NCBI Taxonomy" id="416269"/>
    <lineage>
        <taxon>Bacteria</taxon>
        <taxon>Pseudomonadati</taxon>
        <taxon>Pseudomonadota</taxon>
        <taxon>Gammaproteobacteria</taxon>
        <taxon>Pasteurellales</taxon>
        <taxon>Pasteurellaceae</taxon>
        <taxon>Actinobacillus</taxon>
    </lineage>
</organism>
<accession>A3N3P3</accession>
<protein>
    <recommendedName>
        <fullName evidence="1">Gamma-glutamyl phosphate reductase</fullName>
        <shortName evidence="1">GPR</shortName>
        <ecNumber evidence="1">1.2.1.41</ecNumber>
    </recommendedName>
    <alternativeName>
        <fullName evidence="1">Glutamate-5-semialdehyde dehydrogenase</fullName>
    </alternativeName>
    <alternativeName>
        <fullName evidence="1">Glutamyl-gamma-semialdehyde dehydrogenase</fullName>
        <shortName evidence="1">GSA dehydrogenase</shortName>
    </alternativeName>
</protein>
<keyword id="KW-0028">Amino-acid biosynthesis</keyword>
<keyword id="KW-0963">Cytoplasm</keyword>
<keyword id="KW-0521">NADP</keyword>
<keyword id="KW-0560">Oxidoreductase</keyword>
<keyword id="KW-0641">Proline biosynthesis</keyword>
<keyword id="KW-1185">Reference proteome</keyword>
<comment type="function">
    <text evidence="1">Catalyzes the NADPH-dependent reduction of L-glutamate 5-phosphate into L-glutamate 5-semialdehyde and phosphate. The product spontaneously undergoes cyclization to form 1-pyrroline-5-carboxylate.</text>
</comment>
<comment type="catalytic activity">
    <reaction evidence="1">
        <text>L-glutamate 5-semialdehyde + phosphate + NADP(+) = L-glutamyl 5-phosphate + NADPH + H(+)</text>
        <dbReference type="Rhea" id="RHEA:19541"/>
        <dbReference type="ChEBI" id="CHEBI:15378"/>
        <dbReference type="ChEBI" id="CHEBI:43474"/>
        <dbReference type="ChEBI" id="CHEBI:57783"/>
        <dbReference type="ChEBI" id="CHEBI:58066"/>
        <dbReference type="ChEBI" id="CHEBI:58274"/>
        <dbReference type="ChEBI" id="CHEBI:58349"/>
        <dbReference type="EC" id="1.2.1.41"/>
    </reaction>
</comment>
<comment type="pathway">
    <text evidence="1">Amino-acid biosynthesis; L-proline biosynthesis; L-glutamate 5-semialdehyde from L-glutamate: step 2/2.</text>
</comment>
<comment type="subcellular location">
    <subcellularLocation>
        <location evidence="1">Cytoplasm</location>
    </subcellularLocation>
</comment>
<comment type="similarity">
    <text evidence="1">Belongs to the gamma-glutamyl phosphate reductase family.</text>
</comment>
<reference key="1">
    <citation type="journal article" date="2008" name="J. Bacteriol.">
        <title>The complete genome sequence of Actinobacillus pleuropneumoniae L20 (serotype 5b).</title>
        <authorList>
            <person name="Foote S.J."/>
            <person name="Bosse J.T."/>
            <person name="Bouevitch A.B."/>
            <person name="Langford P.R."/>
            <person name="Young N.M."/>
            <person name="Nash J.H.E."/>
        </authorList>
    </citation>
    <scope>NUCLEOTIDE SEQUENCE [LARGE SCALE GENOMIC DNA]</scope>
    <source>
        <strain>L20</strain>
    </source>
</reference>
<proteinExistence type="inferred from homology"/>
<gene>
    <name evidence="1" type="primary">proA</name>
    <name type="ordered locus">APL_1951</name>
</gene>
<evidence type="ECO:0000255" key="1">
    <source>
        <dbReference type="HAMAP-Rule" id="MF_00412"/>
    </source>
</evidence>